<sequence length="98" mass="11452">MEIRVIDTKENKLLGRKEIYFEVIHEGEPTPSRADVKGKLVAMLDLNPEATVVQYIRSYFGSHVSEGYAKAYESKERMLYIEPEYVLRREGIIQEQEE</sequence>
<feature type="chain" id="PRO_1000211966" description="Small ribosomal subunit protein eS24">
    <location>
        <begin position="1"/>
        <end position="98"/>
    </location>
</feature>
<comment type="similarity">
    <text evidence="1">Belongs to the eukaryotic ribosomal protein eS24 family.</text>
</comment>
<dbReference type="EMBL" id="CP001463">
    <property type="protein sequence ID" value="ACS89100.1"/>
    <property type="molecule type" value="Genomic_DNA"/>
</dbReference>
<dbReference type="RefSeq" id="WP_012766061.1">
    <property type="nucleotide sequence ID" value="NC_012883.1"/>
</dbReference>
<dbReference type="SMR" id="C6A0F5"/>
<dbReference type="STRING" id="604354.TSIB_0029"/>
<dbReference type="GeneID" id="8094996"/>
<dbReference type="KEGG" id="tsi:TSIB_0029"/>
<dbReference type="eggNOG" id="arCOG04182">
    <property type="taxonomic scope" value="Archaea"/>
</dbReference>
<dbReference type="HOGENOM" id="CLU_107248_3_2_2"/>
<dbReference type="OrthoDB" id="27533at2157"/>
<dbReference type="Proteomes" id="UP000009079">
    <property type="component" value="Chromosome"/>
</dbReference>
<dbReference type="GO" id="GO:1990904">
    <property type="term" value="C:ribonucleoprotein complex"/>
    <property type="evidence" value="ECO:0007669"/>
    <property type="project" value="UniProtKB-KW"/>
</dbReference>
<dbReference type="GO" id="GO:0005840">
    <property type="term" value="C:ribosome"/>
    <property type="evidence" value="ECO:0007669"/>
    <property type="project" value="UniProtKB-KW"/>
</dbReference>
<dbReference type="GO" id="GO:0003735">
    <property type="term" value="F:structural constituent of ribosome"/>
    <property type="evidence" value="ECO:0007669"/>
    <property type="project" value="InterPro"/>
</dbReference>
<dbReference type="GO" id="GO:0006412">
    <property type="term" value="P:translation"/>
    <property type="evidence" value="ECO:0007669"/>
    <property type="project" value="UniProtKB-UniRule"/>
</dbReference>
<dbReference type="Gene3D" id="3.30.70.330">
    <property type="match status" value="1"/>
</dbReference>
<dbReference type="HAMAP" id="MF_00545">
    <property type="entry name" value="Ribosomal_eS24"/>
    <property type="match status" value="1"/>
</dbReference>
<dbReference type="InterPro" id="IPR012677">
    <property type="entry name" value="Nucleotide-bd_a/b_plait_sf"/>
</dbReference>
<dbReference type="InterPro" id="IPR001976">
    <property type="entry name" value="Ribosomal_eS24"/>
</dbReference>
<dbReference type="InterPro" id="IPR018098">
    <property type="entry name" value="Ribosomal_eS24_CS"/>
</dbReference>
<dbReference type="InterPro" id="IPR012678">
    <property type="entry name" value="Ribosomal_uL23/eL15/eS24_sf"/>
</dbReference>
<dbReference type="PANTHER" id="PTHR10496">
    <property type="entry name" value="40S RIBOSOMAL PROTEIN S24"/>
    <property type="match status" value="1"/>
</dbReference>
<dbReference type="Pfam" id="PF01282">
    <property type="entry name" value="Ribosomal_S24e"/>
    <property type="match status" value="1"/>
</dbReference>
<dbReference type="SUPFAM" id="SSF54189">
    <property type="entry name" value="Ribosomal proteins S24e, L23 and L15e"/>
    <property type="match status" value="1"/>
</dbReference>
<dbReference type="PROSITE" id="PS00529">
    <property type="entry name" value="RIBOSOMAL_S24E"/>
    <property type="match status" value="1"/>
</dbReference>
<gene>
    <name evidence="1" type="primary">rps24e</name>
    <name type="ordered locus">TSIB_0029</name>
</gene>
<evidence type="ECO:0000255" key="1">
    <source>
        <dbReference type="HAMAP-Rule" id="MF_00545"/>
    </source>
</evidence>
<evidence type="ECO:0000305" key="2"/>
<keyword id="KW-1185">Reference proteome</keyword>
<keyword id="KW-0687">Ribonucleoprotein</keyword>
<keyword id="KW-0689">Ribosomal protein</keyword>
<accession>C6A0F5</accession>
<reference key="1">
    <citation type="journal article" date="2009" name="Appl. Environ. Microbiol.">
        <title>Metabolic versatility and indigenous origin of the archaeon Thermococcus sibiricus, isolated from a siberian oil reservoir, as revealed by genome analysis.</title>
        <authorList>
            <person name="Mardanov A.V."/>
            <person name="Ravin N.V."/>
            <person name="Svetlitchnyi V.A."/>
            <person name="Beletsky A.V."/>
            <person name="Miroshnichenko M.L."/>
            <person name="Bonch-Osmolovskaya E.A."/>
            <person name="Skryabin K.G."/>
        </authorList>
    </citation>
    <scope>NUCLEOTIDE SEQUENCE [LARGE SCALE GENOMIC DNA]</scope>
    <source>
        <strain>DSM 12597 / MM 739</strain>
    </source>
</reference>
<organism>
    <name type="scientific">Thermococcus sibiricus (strain DSM 12597 / MM 739)</name>
    <dbReference type="NCBI Taxonomy" id="604354"/>
    <lineage>
        <taxon>Archaea</taxon>
        <taxon>Methanobacteriati</taxon>
        <taxon>Methanobacteriota</taxon>
        <taxon>Thermococci</taxon>
        <taxon>Thermococcales</taxon>
        <taxon>Thermococcaceae</taxon>
        <taxon>Thermococcus</taxon>
    </lineage>
</organism>
<protein>
    <recommendedName>
        <fullName evidence="1">Small ribosomal subunit protein eS24</fullName>
    </recommendedName>
    <alternativeName>
        <fullName evidence="2">30S ribosomal protein S24e</fullName>
    </alternativeName>
</protein>
<name>RS24_THESM</name>
<proteinExistence type="inferred from homology"/>